<sequence length="172" mass="18966">MPPSSSNTAAASRSASKRLIKELETWSREQKEEKGIERLGPVNEGDLMEWEAVINGRGIGQGYDEGRWLVNISIPSTYPLAPPKMTFVTPIVHPNIALQNGEICLDLLKDAWTPAYSVLECVRAVRMLLGCPETDSPLNVDVAALLRSGDVLGTRKLVELWCQDSDSRYEGP</sequence>
<keyword id="KW-0067">ATP-binding</keyword>
<keyword id="KW-0547">Nucleotide-binding</keyword>
<keyword id="KW-0962">Peroxisome biogenesis</keyword>
<keyword id="KW-1185">Reference proteome</keyword>
<keyword id="KW-0808">Transferase</keyword>
<keyword id="KW-0833">Ubl conjugation pathway</keyword>
<keyword id="KW-0843">Virulence</keyword>
<organism>
    <name type="scientific">Gibberella zeae (strain ATCC MYA-4620 / CBS 123657 / FGSC 9075 / NRRL 31084 / PH-1)</name>
    <name type="common">Wheat head blight fungus</name>
    <name type="synonym">Fusarium graminearum</name>
    <dbReference type="NCBI Taxonomy" id="229533"/>
    <lineage>
        <taxon>Eukaryota</taxon>
        <taxon>Fungi</taxon>
        <taxon>Dikarya</taxon>
        <taxon>Ascomycota</taxon>
        <taxon>Pezizomycotina</taxon>
        <taxon>Sordariomycetes</taxon>
        <taxon>Hypocreomycetidae</taxon>
        <taxon>Hypocreales</taxon>
        <taxon>Nectriaceae</taxon>
        <taxon>Fusarium</taxon>
    </lineage>
</organism>
<comment type="function">
    <text evidence="2">Ubiquitin-conjugating enzyme E2 that is essential for peroxisome biogenesis and plays a key role in development, pathogenicity, and cell wall integrity (PubMed:30603875). Required for long and very long-chain fatty acid utilization and is involved in lipid droplet accumulation and the elimination of reactive oxygen species (PubMed:30603875). Controls the expression of proteins involved in protein biosynthesis, fatty acid metabolism, cell wall synthesis, oxidation-reduction reactions, as well as of the enzymes involved in the biosynthesis of the mycotoxin deoxynivalenol (DON), including TRI5, TRI6, and TRI10 (PubMed:30603875).</text>
</comment>
<comment type="catalytic activity">
    <reaction evidence="4">
        <text>S-ubiquitinyl-[E1 ubiquitin-activating enzyme]-L-cysteine + [E2 ubiquitin-conjugating enzyme]-L-cysteine = [E1 ubiquitin-activating enzyme]-L-cysteine + S-ubiquitinyl-[E2 ubiquitin-conjugating enzyme]-L-cysteine.</text>
        <dbReference type="EC" id="2.3.2.23"/>
    </reaction>
</comment>
<comment type="pathway">
    <text evidence="1">Protein modification; protein ubiquitination.</text>
</comment>
<comment type="disruption phenotype">
    <text evidence="2">Impairs hyphal growth, conidiation, conidial germination, and sexual reproduction (PubMed:30603875). Leads to a defect in pathogenicity and production of the mycotoxin deoxynivalenol (DON) (PubMed:30603875). Displays lipid droplet accumulation (PubMed:30603875). Shows reduced tolerance towards oxidative stress (PubMed:30603875). Leads to down-regulation of protein expression levels related to protein biosynthesis, fatty acid metabolism, cell wall synthesis, and oxidation-reduction reactions (PubMed:30603875).</text>
</comment>
<comment type="similarity">
    <text evidence="1">Belongs to the ubiquitin-conjugating enzyme family.</text>
</comment>
<dbReference type="EC" id="2.3.2.23" evidence="4"/>
<dbReference type="EMBL" id="HG970335">
    <property type="protein sequence ID" value="CEF85136.1"/>
    <property type="molecule type" value="Genomic_DNA"/>
</dbReference>
<dbReference type="RefSeq" id="XP_011326512.1">
    <property type="nucleotide sequence ID" value="XM_011328210.1"/>
</dbReference>
<dbReference type="SMR" id="I1RRW0"/>
<dbReference type="FunCoup" id="I1RRW0">
    <property type="interactions" value="84"/>
</dbReference>
<dbReference type="STRING" id="229533.I1RRW0"/>
<dbReference type="KEGG" id="fgr:FGSG_06857"/>
<dbReference type="VEuPathDB" id="FungiDB:FGRAMPH1_01G23345"/>
<dbReference type="eggNOG" id="KOG0417">
    <property type="taxonomic scope" value="Eukaryota"/>
</dbReference>
<dbReference type="HOGENOM" id="CLU_030988_13_0_1"/>
<dbReference type="InParanoid" id="I1RRW0"/>
<dbReference type="OrthoDB" id="61208at110618"/>
<dbReference type="UniPathway" id="UPA00143"/>
<dbReference type="PHI-base" id="PHI:8743"/>
<dbReference type="Proteomes" id="UP000070720">
    <property type="component" value="Chromosome 4"/>
</dbReference>
<dbReference type="GO" id="GO:0005777">
    <property type="term" value="C:peroxisome"/>
    <property type="evidence" value="ECO:0000304"/>
    <property type="project" value="PHI-base"/>
</dbReference>
<dbReference type="GO" id="GO:0005524">
    <property type="term" value="F:ATP binding"/>
    <property type="evidence" value="ECO:0007669"/>
    <property type="project" value="UniProtKB-KW"/>
</dbReference>
<dbReference type="GO" id="GO:0061631">
    <property type="term" value="F:ubiquitin conjugating enzyme activity"/>
    <property type="evidence" value="ECO:0000304"/>
    <property type="project" value="PHI-base"/>
</dbReference>
<dbReference type="GO" id="GO:0016557">
    <property type="term" value="P:peroxisome membrane biogenesis"/>
    <property type="evidence" value="ECO:0000269"/>
    <property type="project" value="PHI-base"/>
</dbReference>
<dbReference type="GO" id="GO:0016562">
    <property type="term" value="P:protein import into peroxisome matrix, receptor recycling"/>
    <property type="evidence" value="ECO:0000304"/>
    <property type="project" value="PHI-base"/>
</dbReference>
<dbReference type="GO" id="GO:0016567">
    <property type="term" value="P:protein ubiquitination"/>
    <property type="evidence" value="ECO:0007669"/>
    <property type="project" value="UniProtKB-UniPathway"/>
</dbReference>
<dbReference type="CDD" id="cd23812">
    <property type="entry name" value="UBCc_ScPEX4-like"/>
    <property type="match status" value="1"/>
</dbReference>
<dbReference type="Gene3D" id="3.10.110.10">
    <property type="entry name" value="Ubiquitin Conjugating Enzyme"/>
    <property type="match status" value="1"/>
</dbReference>
<dbReference type="InterPro" id="IPR050113">
    <property type="entry name" value="Ub_conjugating_enzyme"/>
</dbReference>
<dbReference type="InterPro" id="IPR000608">
    <property type="entry name" value="UBQ-conjugat_E2_core"/>
</dbReference>
<dbReference type="InterPro" id="IPR016135">
    <property type="entry name" value="UBQ-conjugating_enzyme/RWD"/>
</dbReference>
<dbReference type="PANTHER" id="PTHR24067">
    <property type="entry name" value="UBIQUITIN-CONJUGATING ENZYME E2"/>
    <property type="match status" value="1"/>
</dbReference>
<dbReference type="Pfam" id="PF00179">
    <property type="entry name" value="UQ_con"/>
    <property type="match status" value="1"/>
</dbReference>
<dbReference type="SMART" id="SM00212">
    <property type="entry name" value="UBCc"/>
    <property type="match status" value="1"/>
</dbReference>
<dbReference type="SUPFAM" id="SSF54495">
    <property type="entry name" value="UBC-like"/>
    <property type="match status" value="1"/>
</dbReference>
<dbReference type="PROSITE" id="PS50127">
    <property type="entry name" value="UBC_2"/>
    <property type="match status" value="1"/>
</dbReference>
<reference key="1">
    <citation type="journal article" date="2007" name="Science">
        <title>The Fusarium graminearum genome reveals a link between localized polymorphism and pathogen specialization.</title>
        <authorList>
            <person name="Cuomo C.A."/>
            <person name="Gueldener U."/>
            <person name="Xu J.-R."/>
            <person name="Trail F."/>
            <person name="Turgeon B.G."/>
            <person name="Di Pietro A."/>
            <person name="Walton J.D."/>
            <person name="Ma L.-J."/>
            <person name="Baker S.E."/>
            <person name="Rep M."/>
            <person name="Adam G."/>
            <person name="Antoniw J."/>
            <person name="Baldwin T."/>
            <person name="Calvo S.E."/>
            <person name="Chang Y.-L."/>
            <person name="DeCaprio D."/>
            <person name="Gale L.R."/>
            <person name="Gnerre S."/>
            <person name="Goswami R.S."/>
            <person name="Hammond-Kosack K."/>
            <person name="Harris L.J."/>
            <person name="Hilburn K."/>
            <person name="Kennell J.C."/>
            <person name="Kroken S."/>
            <person name="Magnuson J.K."/>
            <person name="Mannhaupt G."/>
            <person name="Mauceli E.W."/>
            <person name="Mewes H.-W."/>
            <person name="Mitterbauer R."/>
            <person name="Muehlbauer G."/>
            <person name="Muensterkoetter M."/>
            <person name="Nelson D."/>
            <person name="O'Donnell K."/>
            <person name="Ouellet T."/>
            <person name="Qi W."/>
            <person name="Quesneville H."/>
            <person name="Roncero M.I.G."/>
            <person name="Seong K.-Y."/>
            <person name="Tetko I.V."/>
            <person name="Urban M."/>
            <person name="Waalwijk C."/>
            <person name="Ward T.J."/>
            <person name="Yao J."/>
            <person name="Birren B.W."/>
            <person name="Kistler H.C."/>
        </authorList>
    </citation>
    <scope>NUCLEOTIDE SEQUENCE [LARGE SCALE GENOMIC DNA]</scope>
    <source>
        <strain>ATCC MYA-4620 / CBS 123657 / FGSC 9075 / NRRL 31084 / PH-1</strain>
    </source>
</reference>
<reference key="2">
    <citation type="journal article" date="2010" name="Nature">
        <title>Comparative genomics reveals mobile pathogenicity chromosomes in Fusarium.</title>
        <authorList>
            <person name="Ma L.-J."/>
            <person name="van der Does H.C."/>
            <person name="Borkovich K.A."/>
            <person name="Coleman J.J."/>
            <person name="Daboussi M.-J."/>
            <person name="Di Pietro A."/>
            <person name="Dufresne M."/>
            <person name="Freitag M."/>
            <person name="Grabherr M."/>
            <person name="Henrissat B."/>
            <person name="Houterman P.M."/>
            <person name="Kang S."/>
            <person name="Shim W.-B."/>
            <person name="Woloshuk C."/>
            <person name="Xie X."/>
            <person name="Xu J.-R."/>
            <person name="Antoniw J."/>
            <person name="Baker S.E."/>
            <person name="Bluhm B.H."/>
            <person name="Breakspear A."/>
            <person name="Brown D.W."/>
            <person name="Butchko R.A.E."/>
            <person name="Chapman S."/>
            <person name="Coulson R."/>
            <person name="Coutinho P.M."/>
            <person name="Danchin E.G.J."/>
            <person name="Diener A."/>
            <person name="Gale L.R."/>
            <person name="Gardiner D.M."/>
            <person name="Goff S."/>
            <person name="Hammond-Kosack K.E."/>
            <person name="Hilburn K."/>
            <person name="Hua-Van A."/>
            <person name="Jonkers W."/>
            <person name="Kazan K."/>
            <person name="Kodira C.D."/>
            <person name="Koehrsen M."/>
            <person name="Kumar L."/>
            <person name="Lee Y.-H."/>
            <person name="Li L."/>
            <person name="Manners J.M."/>
            <person name="Miranda-Saavedra D."/>
            <person name="Mukherjee M."/>
            <person name="Park G."/>
            <person name="Park J."/>
            <person name="Park S.-Y."/>
            <person name="Proctor R.H."/>
            <person name="Regev A."/>
            <person name="Ruiz-Roldan M.C."/>
            <person name="Sain D."/>
            <person name="Sakthikumar S."/>
            <person name="Sykes S."/>
            <person name="Schwartz D.C."/>
            <person name="Turgeon B.G."/>
            <person name="Wapinski I."/>
            <person name="Yoder O."/>
            <person name="Young S."/>
            <person name="Zeng Q."/>
            <person name="Zhou S."/>
            <person name="Galagan J."/>
            <person name="Cuomo C.A."/>
            <person name="Kistler H.C."/>
            <person name="Rep M."/>
        </authorList>
    </citation>
    <scope>GENOME REANNOTATION</scope>
    <source>
        <strain>ATCC MYA-4620 / CBS 123657 / FGSC 9075 / NRRL 31084 / PH-1</strain>
    </source>
</reference>
<reference key="3">
    <citation type="journal article" date="2015" name="BMC Genomics">
        <title>The completed genome sequence of the pathogenic ascomycete fungus Fusarium graminearum.</title>
        <authorList>
            <person name="King R."/>
            <person name="Urban M."/>
            <person name="Hammond-Kosack M.C.U."/>
            <person name="Hassani-Pak K."/>
            <person name="Hammond-Kosack K.E."/>
        </authorList>
    </citation>
    <scope>NUCLEOTIDE SEQUENCE [LARGE SCALE GENOMIC DNA]</scope>
    <source>
        <strain>ATCC MYA-4620 / CBS 123657 / FGSC 9075 / NRRL 31084 / PH-1</strain>
    </source>
</reference>
<reference key="4">
    <citation type="journal article" date="2019" name="Curr. Genet.">
        <title>FgPEX4 is involved in development, pathogenicity, and cell wall integrity in Fusarium graminearum.</title>
        <authorList>
            <person name="Zhang L."/>
            <person name="Wang L."/>
            <person name="Liang Y."/>
            <person name="Yu J."/>
        </authorList>
    </citation>
    <scope>FUNCTION</scope>
    <scope>DISRUPTION PHENOTYPE</scope>
</reference>
<protein>
    <recommendedName>
        <fullName evidence="3">Ubiquitin-conjugating enzyme E2 PEX4</fullName>
        <ecNumber evidence="4">2.3.2.23</ecNumber>
    </recommendedName>
    <alternativeName>
        <fullName evidence="3">E2 ubiquitin-conjugating enzyme PEX4</fullName>
    </alternativeName>
    <alternativeName>
        <fullName evidence="3">Peroxin-4</fullName>
    </alternativeName>
    <alternativeName>
        <fullName evidence="3">Peroxisome biogenesis factor 4</fullName>
    </alternativeName>
</protein>
<evidence type="ECO:0000255" key="1">
    <source>
        <dbReference type="PROSITE-ProRule" id="PRU00388"/>
    </source>
</evidence>
<evidence type="ECO:0000269" key="2">
    <source>
    </source>
</evidence>
<evidence type="ECO:0000303" key="3">
    <source>
    </source>
</evidence>
<evidence type="ECO:0000305" key="4">
    <source>
    </source>
</evidence>
<accession>I1RRW0</accession>
<gene>
    <name evidence="3" type="primary">PEX4</name>
    <name type="ORF">FG06857</name>
    <name type="ORF">FGRAMPH1_01T23345</name>
</gene>
<name>PEX4_GIBZE</name>
<feature type="chain" id="PRO_0000449259" description="Ubiquitin-conjugating enzyme E2 PEX4">
    <location>
        <begin position="1"/>
        <end position="172"/>
    </location>
</feature>
<feature type="domain" description="UBC core" evidence="1">
    <location>
        <begin position="14"/>
        <end position="167"/>
    </location>
</feature>
<feature type="active site" description="Glycyl thioester intermediate" evidence="1">
    <location>
        <position position="104"/>
    </location>
</feature>
<proteinExistence type="inferred from homology"/>